<keyword id="KW-0002">3D-structure</keyword>
<keyword id="KW-0007">Acetylation</keyword>
<keyword id="KW-1185">Reference proteome</keyword>
<reference key="1">
    <citation type="journal article" date="1998" name="Nature">
        <title>Deciphering the biology of Mycobacterium tuberculosis from the complete genome sequence.</title>
        <authorList>
            <person name="Cole S.T."/>
            <person name="Brosch R."/>
            <person name="Parkhill J."/>
            <person name="Garnier T."/>
            <person name="Churcher C.M."/>
            <person name="Harris D.E."/>
            <person name="Gordon S.V."/>
            <person name="Eiglmeier K."/>
            <person name="Gas S."/>
            <person name="Barry C.E. III"/>
            <person name="Tekaia F."/>
            <person name="Badcock K."/>
            <person name="Basham D."/>
            <person name="Brown D."/>
            <person name="Chillingworth T."/>
            <person name="Connor R."/>
            <person name="Davies R.M."/>
            <person name="Devlin K."/>
            <person name="Feltwell T."/>
            <person name="Gentles S."/>
            <person name="Hamlin N."/>
            <person name="Holroyd S."/>
            <person name="Hornsby T."/>
            <person name="Jagels K."/>
            <person name="Krogh A."/>
            <person name="McLean J."/>
            <person name="Moule S."/>
            <person name="Murphy L.D."/>
            <person name="Oliver S."/>
            <person name="Osborne J."/>
            <person name="Quail M.A."/>
            <person name="Rajandream M.A."/>
            <person name="Rogers J."/>
            <person name="Rutter S."/>
            <person name="Seeger K."/>
            <person name="Skelton S."/>
            <person name="Squares S."/>
            <person name="Squares R."/>
            <person name="Sulston J.E."/>
            <person name="Taylor K."/>
            <person name="Whitehead S."/>
            <person name="Barrell B.G."/>
        </authorList>
    </citation>
    <scope>NUCLEOTIDE SEQUENCE [LARGE SCALE GENOMIC DNA]</scope>
    <source>
        <strain>ATCC 25618 / H37Rv</strain>
    </source>
</reference>
<reference key="2">
    <citation type="journal article" date="2008" name="BMC Syst. Biol.">
        <title>targetTB: a target identification pipeline for Mycobacterium tuberculosis through an interactome, reactome and genome-scale structural analysis.</title>
        <authorList>
            <person name="Raman K."/>
            <person name="Yeturu K."/>
            <person name="Chandra N."/>
        </authorList>
    </citation>
    <scope>IDENTIFICATION AS A DRUG TARGET [LARGE SCALE ANALYSIS]</scope>
</reference>
<reference key="3">
    <citation type="journal article" date="2011" name="Mol. Cell. Proteomics">
        <title>Proteogenomic analysis of Mycobacterium tuberculosis by high resolution mass spectrometry.</title>
        <authorList>
            <person name="Kelkar D.S."/>
            <person name="Kumar D."/>
            <person name="Kumar P."/>
            <person name="Balakrishnan L."/>
            <person name="Muthusamy B."/>
            <person name="Yadav A.K."/>
            <person name="Shrivastava P."/>
            <person name="Marimuthu A."/>
            <person name="Anand S."/>
            <person name="Sundaram H."/>
            <person name="Kingsbury R."/>
            <person name="Harsha H.C."/>
            <person name="Nair B."/>
            <person name="Prasad T.S."/>
            <person name="Chauhan D.S."/>
            <person name="Katoch K."/>
            <person name="Katoch V.M."/>
            <person name="Kumar P."/>
            <person name="Chaerkady R."/>
            <person name="Ramachandran S."/>
            <person name="Dash D."/>
            <person name="Pandey A."/>
        </authorList>
    </citation>
    <scope>ACETYLATION [LARGE SCALE ANALYSIS] AT THR-2</scope>
    <scope>CLEAVAGE OF INITIATOR METHIONINE [LARGE SCALE ANALYSIS]</scope>
    <scope>IDENTIFICATION BY MASS SPECTROMETRY [LARGE SCALE ANALYSIS]</scope>
    <source>
        <strain>ATCC 25618 / H37Rv</strain>
    </source>
</reference>
<proteinExistence type="evidence at protein level"/>
<gene>
    <name type="ordered locus">Rv2140c</name>
    <name type="ORF">MTCY270.28</name>
</gene>
<feature type="initiator methionine" description="Removed" evidence="2">
    <location>
        <position position="1"/>
    </location>
</feature>
<feature type="chain" id="PRO_0000137909" description="UPF0098 protein Rv2140c">
    <location>
        <begin position="2"/>
        <end position="176"/>
    </location>
</feature>
<feature type="modified residue" description="N-acetylthreonine" evidence="2">
    <location>
        <position position="2"/>
    </location>
</feature>
<feature type="turn" evidence="3">
    <location>
        <begin position="7"/>
        <end position="10"/>
    </location>
</feature>
<feature type="strand" evidence="3">
    <location>
        <begin position="18"/>
        <end position="20"/>
    </location>
</feature>
<feature type="helix" evidence="3">
    <location>
        <begin position="32"/>
        <end position="34"/>
    </location>
</feature>
<feature type="turn" evidence="3">
    <location>
        <begin position="37"/>
        <end position="40"/>
    </location>
</feature>
<feature type="strand" evidence="3">
    <location>
        <begin position="50"/>
        <end position="53"/>
    </location>
</feature>
<feature type="strand" evidence="3">
    <location>
        <begin position="61"/>
        <end position="68"/>
    </location>
</feature>
<feature type="turn" evidence="3">
    <location>
        <begin position="72"/>
        <end position="75"/>
    </location>
</feature>
<feature type="strand" evidence="3">
    <location>
        <begin position="77"/>
        <end position="86"/>
    </location>
</feature>
<feature type="strand" evidence="3">
    <location>
        <begin position="129"/>
        <end position="142"/>
    </location>
</feature>
<feature type="helix" evidence="3">
    <location>
        <begin position="152"/>
        <end position="162"/>
    </location>
</feature>
<feature type="strand" evidence="3">
    <location>
        <begin position="163"/>
        <end position="174"/>
    </location>
</feature>
<name>Y2140_MYCTU</name>
<dbReference type="EMBL" id="AL123456">
    <property type="protein sequence ID" value="CCP44915.1"/>
    <property type="molecule type" value="Genomic_DNA"/>
</dbReference>
<dbReference type="PIR" id="H70577">
    <property type="entry name" value="H70577"/>
</dbReference>
<dbReference type="RefSeq" id="WP_003411119.1">
    <property type="nucleotide sequence ID" value="NZ_NVQJ01000044.1"/>
</dbReference>
<dbReference type="PDB" id="4BEG">
    <property type="method" value="X-ray"/>
    <property type="resolution" value="1.42 A"/>
    <property type="chains" value="A/B=1-176"/>
</dbReference>
<dbReference type="PDBsum" id="4BEG"/>
<dbReference type="BMRB" id="P9WFN1"/>
<dbReference type="SMR" id="P9WFN1"/>
<dbReference type="MINT" id="P9WFN1"/>
<dbReference type="STRING" id="83332.Rv2140c"/>
<dbReference type="iPTMnet" id="P9WFN1"/>
<dbReference type="PaxDb" id="83332-Rv2140c"/>
<dbReference type="DNASU" id="888118"/>
<dbReference type="KEGG" id="mtu:Rv2140c"/>
<dbReference type="KEGG" id="mtv:RVBD_2140c"/>
<dbReference type="TubercuList" id="Rv2140c"/>
<dbReference type="eggNOG" id="COG1881">
    <property type="taxonomic scope" value="Bacteria"/>
</dbReference>
<dbReference type="InParanoid" id="P9WFN1"/>
<dbReference type="OrthoDB" id="9797506at2"/>
<dbReference type="PhylomeDB" id="P9WFN1"/>
<dbReference type="EvolutionaryTrace" id="P9WFN1"/>
<dbReference type="Proteomes" id="UP000001584">
    <property type="component" value="Chromosome"/>
</dbReference>
<dbReference type="GO" id="GO:0005576">
    <property type="term" value="C:extracellular region"/>
    <property type="evidence" value="ECO:0007005"/>
    <property type="project" value="MTBBASE"/>
</dbReference>
<dbReference type="GO" id="GO:0005886">
    <property type="term" value="C:plasma membrane"/>
    <property type="evidence" value="ECO:0007005"/>
    <property type="project" value="MTBBASE"/>
</dbReference>
<dbReference type="GO" id="GO:0042802">
    <property type="term" value="F:identical protein binding"/>
    <property type="evidence" value="ECO:0000353"/>
    <property type="project" value="IntAct"/>
</dbReference>
<dbReference type="CDD" id="cd00865">
    <property type="entry name" value="PEBP_bact_arch"/>
    <property type="match status" value="1"/>
</dbReference>
<dbReference type="FunFam" id="3.90.280.10:FF:000011">
    <property type="entry name" value="UPF0098 protein Rv2140c"/>
    <property type="match status" value="1"/>
</dbReference>
<dbReference type="Gene3D" id="3.90.280.10">
    <property type="entry name" value="PEBP-like"/>
    <property type="match status" value="1"/>
</dbReference>
<dbReference type="InterPro" id="IPR008914">
    <property type="entry name" value="PEBP"/>
</dbReference>
<dbReference type="InterPro" id="IPR036610">
    <property type="entry name" value="PEBP-like_sf"/>
</dbReference>
<dbReference type="InterPro" id="IPR005247">
    <property type="entry name" value="YbhB_YbcL/LppC-like"/>
</dbReference>
<dbReference type="NCBIfam" id="TIGR00481">
    <property type="entry name" value="YbhB/YbcL family Raf kinase inhibitor-like protein"/>
    <property type="match status" value="1"/>
</dbReference>
<dbReference type="PANTHER" id="PTHR30289:SF1">
    <property type="entry name" value="PEBP (PHOSPHATIDYLETHANOLAMINE-BINDING PROTEIN) FAMILY PROTEIN"/>
    <property type="match status" value="1"/>
</dbReference>
<dbReference type="PANTHER" id="PTHR30289">
    <property type="entry name" value="UNCHARACTERIZED PROTEIN YBCL-RELATED"/>
    <property type="match status" value="1"/>
</dbReference>
<dbReference type="Pfam" id="PF01161">
    <property type="entry name" value="PBP"/>
    <property type="match status" value="1"/>
</dbReference>
<dbReference type="SUPFAM" id="SSF49777">
    <property type="entry name" value="PEBP-like"/>
    <property type="match status" value="1"/>
</dbReference>
<sequence length="176" mass="18634">MTTSPDPYAALPKLPSFSLTSTSITDGQPLATPQVSGIMGAGGADASPQLRWSGFPSETRSFAVTVYDPDAPTLSGFWHWAVANLPANVTELPEGVGDGRELPGGALTLVNDAGMRRYVGAAPPPGHGVHRYYVAVHAVKVEKLDLPEDASPAYLGFNLFQHAIARAVIFGTYEQR</sequence>
<accession>P9WFN1</accession>
<accession>L0T8Y7</accession>
<accession>O06235</accession>
<accession>P67226</accession>
<comment type="interaction">
    <interactant intactId="EBI-6898684">
        <id>P9WFN1</id>
    </interactant>
    <interactant intactId="EBI-6898684">
        <id>P9WFN1</id>
        <label>Rv2140c</label>
    </interactant>
    <organismsDiffer>false</organismsDiffer>
    <experiments>3</experiments>
</comment>
<comment type="miscellaneous">
    <text>Was identified as a high-confidence drug target.</text>
</comment>
<comment type="similarity">
    <text evidence="1">Belongs to the UPF0098 family.</text>
</comment>
<evidence type="ECO:0000305" key="1"/>
<evidence type="ECO:0007744" key="2">
    <source>
    </source>
</evidence>
<evidence type="ECO:0007829" key="3">
    <source>
        <dbReference type="PDB" id="4BEG"/>
    </source>
</evidence>
<organism>
    <name type="scientific">Mycobacterium tuberculosis (strain ATCC 25618 / H37Rv)</name>
    <dbReference type="NCBI Taxonomy" id="83332"/>
    <lineage>
        <taxon>Bacteria</taxon>
        <taxon>Bacillati</taxon>
        <taxon>Actinomycetota</taxon>
        <taxon>Actinomycetes</taxon>
        <taxon>Mycobacteriales</taxon>
        <taxon>Mycobacteriaceae</taxon>
        <taxon>Mycobacterium</taxon>
        <taxon>Mycobacterium tuberculosis complex</taxon>
    </lineage>
</organism>
<protein>
    <recommendedName>
        <fullName>UPF0098 protein Rv2140c</fullName>
    </recommendedName>
</protein>